<gene>
    <name evidence="1" type="primary">dnaJ</name>
    <name type="ordered locus">Asuc_1091</name>
</gene>
<accession>A6VNB0</accession>
<proteinExistence type="inferred from homology"/>
<comment type="function">
    <text evidence="1">Participates actively in the response to hyperosmotic and heat shock by preventing the aggregation of stress-denatured proteins and by disaggregating proteins, also in an autonomous, DnaK-independent fashion. Unfolded proteins bind initially to DnaJ; upon interaction with the DnaJ-bound protein, DnaK hydrolyzes its bound ATP, resulting in the formation of a stable complex. GrpE releases ADP from DnaK; ATP binding to DnaK triggers the release of the substrate protein, thus completing the reaction cycle. Several rounds of ATP-dependent interactions between DnaJ, DnaK and GrpE are required for fully efficient folding. Also involved, together with DnaK and GrpE, in the DNA replication of plasmids through activation of initiation proteins.</text>
</comment>
<comment type="cofactor">
    <cofactor evidence="1">
        <name>Zn(2+)</name>
        <dbReference type="ChEBI" id="CHEBI:29105"/>
    </cofactor>
    <text evidence="1">Binds 2 Zn(2+) ions per monomer.</text>
</comment>
<comment type="subunit">
    <text evidence="1">Homodimer.</text>
</comment>
<comment type="subcellular location">
    <subcellularLocation>
        <location evidence="1">Cytoplasm</location>
    </subcellularLocation>
</comment>
<comment type="domain">
    <text evidence="1">The J domain is necessary and sufficient to stimulate DnaK ATPase activity. Zinc center 1 plays an important role in the autonomous, DnaK-independent chaperone activity of DnaJ. Zinc center 2 is essential for interaction with DnaK and for DnaJ activity.</text>
</comment>
<comment type="similarity">
    <text evidence="1">Belongs to the DnaJ family.</text>
</comment>
<protein>
    <recommendedName>
        <fullName evidence="1">Chaperone protein DnaJ</fullName>
    </recommendedName>
</protein>
<evidence type="ECO:0000255" key="1">
    <source>
        <dbReference type="HAMAP-Rule" id="MF_01152"/>
    </source>
</evidence>
<dbReference type="EMBL" id="CP000746">
    <property type="protein sequence ID" value="ABR74457.1"/>
    <property type="molecule type" value="Genomic_DNA"/>
</dbReference>
<dbReference type="RefSeq" id="WP_012072834.1">
    <property type="nucleotide sequence ID" value="NC_009655.1"/>
</dbReference>
<dbReference type="SMR" id="A6VNB0"/>
<dbReference type="STRING" id="339671.Asuc_1091"/>
<dbReference type="KEGG" id="asu:Asuc_1091"/>
<dbReference type="eggNOG" id="COG0484">
    <property type="taxonomic scope" value="Bacteria"/>
</dbReference>
<dbReference type="HOGENOM" id="CLU_017633_0_7_6"/>
<dbReference type="OrthoDB" id="9779889at2"/>
<dbReference type="Proteomes" id="UP000001114">
    <property type="component" value="Chromosome"/>
</dbReference>
<dbReference type="GO" id="GO:0005737">
    <property type="term" value="C:cytoplasm"/>
    <property type="evidence" value="ECO:0007669"/>
    <property type="project" value="UniProtKB-SubCell"/>
</dbReference>
<dbReference type="GO" id="GO:0005524">
    <property type="term" value="F:ATP binding"/>
    <property type="evidence" value="ECO:0007669"/>
    <property type="project" value="InterPro"/>
</dbReference>
<dbReference type="GO" id="GO:0031072">
    <property type="term" value="F:heat shock protein binding"/>
    <property type="evidence" value="ECO:0007669"/>
    <property type="project" value="InterPro"/>
</dbReference>
<dbReference type="GO" id="GO:0051082">
    <property type="term" value="F:unfolded protein binding"/>
    <property type="evidence" value="ECO:0007669"/>
    <property type="project" value="UniProtKB-UniRule"/>
</dbReference>
<dbReference type="GO" id="GO:0008270">
    <property type="term" value="F:zinc ion binding"/>
    <property type="evidence" value="ECO:0007669"/>
    <property type="project" value="UniProtKB-UniRule"/>
</dbReference>
<dbReference type="GO" id="GO:0051085">
    <property type="term" value="P:chaperone cofactor-dependent protein refolding"/>
    <property type="evidence" value="ECO:0007669"/>
    <property type="project" value="TreeGrafter"/>
</dbReference>
<dbReference type="GO" id="GO:0006260">
    <property type="term" value="P:DNA replication"/>
    <property type="evidence" value="ECO:0007669"/>
    <property type="project" value="UniProtKB-KW"/>
</dbReference>
<dbReference type="GO" id="GO:0042026">
    <property type="term" value="P:protein refolding"/>
    <property type="evidence" value="ECO:0007669"/>
    <property type="project" value="TreeGrafter"/>
</dbReference>
<dbReference type="GO" id="GO:0009408">
    <property type="term" value="P:response to heat"/>
    <property type="evidence" value="ECO:0007669"/>
    <property type="project" value="InterPro"/>
</dbReference>
<dbReference type="CDD" id="cd06257">
    <property type="entry name" value="DnaJ"/>
    <property type="match status" value="1"/>
</dbReference>
<dbReference type="CDD" id="cd10747">
    <property type="entry name" value="DnaJ_C"/>
    <property type="match status" value="1"/>
</dbReference>
<dbReference type="CDD" id="cd10719">
    <property type="entry name" value="DnaJ_zf"/>
    <property type="match status" value="1"/>
</dbReference>
<dbReference type="FunFam" id="1.10.287.110:FF:000034">
    <property type="entry name" value="Chaperone protein DnaJ"/>
    <property type="match status" value="1"/>
</dbReference>
<dbReference type="FunFam" id="2.10.230.10:FF:000002">
    <property type="entry name" value="Molecular chaperone DnaJ"/>
    <property type="match status" value="1"/>
</dbReference>
<dbReference type="FunFam" id="2.60.260.20:FF:000004">
    <property type="entry name" value="Molecular chaperone DnaJ"/>
    <property type="match status" value="1"/>
</dbReference>
<dbReference type="Gene3D" id="1.10.287.110">
    <property type="entry name" value="DnaJ domain"/>
    <property type="match status" value="1"/>
</dbReference>
<dbReference type="Gene3D" id="2.10.230.10">
    <property type="entry name" value="Heat shock protein DnaJ, cysteine-rich domain"/>
    <property type="match status" value="1"/>
</dbReference>
<dbReference type="Gene3D" id="2.60.260.20">
    <property type="entry name" value="Urease metallochaperone UreE, N-terminal domain"/>
    <property type="match status" value="2"/>
</dbReference>
<dbReference type="HAMAP" id="MF_01152">
    <property type="entry name" value="DnaJ"/>
    <property type="match status" value="1"/>
</dbReference>
<dbReference type="InterPro" id="IPR012724">
    <property type="entry name" value="DnaJ"/>
</dbReference>
<dbReference type="InterPro" id="IPR002939">
    <property type="entry name" value="DnaJ_C"/>
</dbReference>
<dbReference type="InterPro" id="IPR001623">
    <property type="entry name" value="DnaJ_domain"/>
</dbReference>
<dbReference type="InterPro" id="IPR018253">
    <property type="entry name" value="DnaJ_domain_CS"/>
</dbReference>
<dbReference type="InterPro" id="IPR008971">
    <property type="entry name" value="HSP40/DnaJ_pept-bd"/>
</dbReference>
<dbReference type="InterPro" id="IPR001305">
    <property type="entry name" value="HSP_DnaJ_Cys-rich_dom"/>
</dbReference>
<dbReference type="InterPro" id="IPR036410">
    <property type="entry name" value="HSP_DnaJ_Cys-rich_dom_sf"/>
</dbReference>
<dbReference type="InterPro" id="IPR036869">
    <property type="entry name" value="J_dom_sf"/>
</dbReference>
<dbReference type="NCBIfam" id="TIGR02349">
    <property type="entry name" value="DnaJ_bact"/>
    <property type="match status" value="1"/>
</dbReference>
<dbReference type="NCBIfam" id="NF008035">
    <property type="entry name" value="PRK10767.1"/>
    <property type="match status" value="1"/>
</dbReference>
<dbReference type="PANTHER" id="PTHR43096:SF48">
    <property type="entry name" value="CHAPERONE PROTEIN DNAJ"/>
    <property type="match status" value="1"/>
</dbReference>
<dbReference type="PANTHER" id="PTHR43096">
    <property type="entry name" value="DNAJ HOMOLOG 1, MITOCHONDRIAL-RELATED"/>
    <property type="match status" value="1"/>
</dbReference>
<dbReference type="Pfam" id="PF00226">
    <property type="entry name" value="DnaJ"/>
    <property type="match status" value="1"/>
</dbReference>
<dbReference type="Pfam" id="PF01556">
    <property type="entry name" value="DnaJ_C"/>
    <property type="match status" value="1"/>
</dbReference>
<dbReference type="Pfam" id="PF00684">
    <property type="entry name" value="DnaJ_CXXCXGXG"/>
    <property type="match status" value="1"/>
</dbReference>
<dbReference type="PRINTS" id="PR00625">
    <property type="entry name" value="JDOMAIN"/>
</dbReference>
<dbReference type="SMART" id="SM00271">
    <property type="entry name" value="DnaJ"/>
    <property type="match status" value="1"/>
</dbReference>
<dbReference type="SUPFAM" id="SSF46565">
    <property type="entry name" value="Chaperone J-domain"/>
    <property type="match status" value="1"/>
</dbReference>
<dbReference type="SUPFAM" id="SSF57938">
    <property type="entry name" value="DnaJ/Hsp40 cysteine-rich domain"/>
    <property type="match status" value="1"/>
</dbReference>
<dbReference type="SUPFAM" id="SSF49493">
    <property type="entry name" value="HSP40/DnaJ peptide-binding domain"/>
    <property type="match status" value="2"/>
</dbReference>
<dbReference type="PROSITE" id="PS00636">
    <property type="entry name" value="DNAJ_1"/>
    <property type="match status" value="1"/>
</dbReference>
<dbReference type="PROSITE" id="PS50076">
    <property type="entry name" value="DNAJ_2"/>
    <property type="match status" value="1"/>
</dbReference>
<dbReference type="PROSITE" id="PS51188">
    <property type="entry name" value="ZF_CR"/>
    <property type="match status" value="1"/>
</dbReference>
<reference key="1">
    <citation type="journal article" date="2010" name="BMC Genomics">
        <title>A genomic perspective on the potential of Actinobacillus succinogenes for industrial succinate production.</title>
        <authorList>
            <person name="McKinlay J.B."/>
            <person name="Laivenieks M."/>
            <person name="Schindler B.D."/>
            <person name="McKinlay A.A."/>
            <person name="Siddaramappa S."/>
            <person name="Challacombe J.F."/>
            <person name="Lowry S.R."/>
            <person name="Clum A."/>
            <person name="Lapidus A.L."/>
            <person name="Burkhart K.B."/>
            <person name="Harkins V."/>
            <person name="Vieille C."/>
        </authorList>
    </citation>
    <scope>NUCLEOTIDE SEQUENCE [LARGE SCALE GENOMIC DNA]</scope>
    <source>
        <strain>ATCC 55618 / DSM 22257 / CCUG 43843 / 130Z</strain>
    </source>
</reference>
<feature type="chain" id="PRO_1000085135" description="Chaperone protein DnaJ">
    <location>
        <begin position="1"/>
        <end position="377"/>
    </location>
</feature>
<feature type="domain" description="J" evidence="1">
    <location>
        <begin position="5"/>
        <end position="70"/>
    </location>
</feature>
<feature type="repeat" description="CXXCXGXG motif">
    <location>
        <begin position="147"/>
        <end position="154"/>
    </location>
</feature>
<feature type="repeat" description="CXXCXGXG motif">
    <location>
        <begin position="164"/>
        <end position="171"/>
    </location>
</feature>
<feature type="repeat" description="CXXCXGXG motif">
    <location>
        <begin position="186"/>
        <end position="193"/>
    </location>
</feature>
<feature type="repeat" description="CXXCXGXG motif">
    <location>
        <begin position="200"/>
        <end position="207"/>
    </location>
</feature>
<feature type="zinc finger region" description="CR-type" evidence="1">
    <location>
        <begin position="134"/>
        <end position="212"/>
    </location>
</feature>
<feature type="binding site" evidence="1">
    <location>
        <position position="147"/>
    </location>
    <ligand>
        <name>Zn(2+)</name>
        <dbReference type="ChEBI" id="CHEBI:29105"/>
        <label>1</label>
    </ligand>
</feature>
<feature type="binding site" evidence="1">
    <location>
        <position position="150"/>
    </location>
    <ligand>
        <name>Zn(2+)</name>
        <dbReference type="ChEBI" id="CHEBI:29105"/>
        <label>1</label>
    </ligand>
</feature>
<feature type="binding site" evidence="1">
    <location>
        <position position="164"/>
    </location>
    <ligand>
        <name>Zn(2+)</name>
        <dbReference type="ChEBI" id="CHEBI:29105"/>
        <label>2</label>
    </ligand>
</feature>
<feature type="binding site" evidence="1">
    <location>
        <position position="167"/>
    </location>
    <ligand>
        <name>Zn(2+)</name>
        <dbReference type="ChEBI" id="CHEBI:29105"/>
        <label>2</label>
    </ligand>
</feature>
<feature type="binding site" evidence="1">
    <location>
        <position position="186"/>
    </location>
    <ligand>
        <name>Zn(2+)</name>
        <dbReference type="ChEBI" id="CHEBI:29105"/>
        <label>2</label>
    </ligand>
</feature>
<feature type="binding site" evidence="1">
    <location>
        <position position="189"/>
    </location>
    <ligand>
        <name>Zn(2+)</name>
        <dbReference type="ChEBI" id="CHEBI:29105"/>
        <label>2</label>
    </ligand>
</feature>
<feature type="binding site" evidence="1">
    <location>
        <position position="200"/>
    </location>
    <ligand>
        <name>Zn(2+)</name>
        <dbReference type="ChEBI" id="CHEBI:29105"/>
        <label>1</label>
    </ligand>
</feature>
<feature type="binding site" evidence="1">
    <location>
        <position position="203"/>
    </location>
    <ligand>
        <name>Zn(2+)</name>
        <dbReference type="ChEBI" id="CHEBI:29105"/>
        <label>1</label>
    </ligand>
</feature>
<keyword id="KW-0143">Chaperone</keyword>
<keyword id="KW-0963">Cytoplasm</keyword>
<keyword id="KW-0235">DNA replication</keyword>
<keyword id="KW-0479">Metal-binding</keyword>
<keyword id="KW-1185">Reference proteome</keyword>
<keyword id="KW-0677">Repeat</keyword>
<keyword id="KW-0346">Stress response</keyword>
<keyword id="KW-0862">Zinc</keyword>
<keyword id="KW-0863">Zinc-finger</keyword>
<sequence>MAKQDYYEILGVERGADEKAIKKAYKRLAMKYHPDRTKGDKTSEEKFKEINEAYEILSDKEKRAAYDQYGHAAFEQGGFGGAGAGGFGGGFGGFGGFEDIFSEMFGGGSSRQRVVRGDDLRYDIEITLEEAVRGITKDIQIQTLATCDHCNGSGAEKGSKVETCPTCHGHGRVRRQQGFFMTETTCPHCHGTGKKIEKPCKKCHGDGRVHKTESLSVKIPAGVDTGNQLRLAGKGAAGENGAPAGDLYVVIHVKEHHIFERDGNNLYCEVPISFTQAALGGEIEVPTLDGRAKLKIPEGTQTGTMFRMRGKGITAMRSGYSGDLICKITVETPVKLTDEQKDLLHKLEASLEGKTTQRPKSSSFLDGVKKFFDNLGK</sequence>
<name>DNAJ_ACTSZ</name>
<organism>
    <name type="scientific">Actinobacillus succinogenes (strain ATCC 55618 / DSM 22257 / CCUG 43843 / 130Z)</name>
    <dbReference type="NCBI Taxonomy" id="339671"/>
    <lineage>
        <taxon>Bacteria</taxon>
        <taxon>Pseudomonadati</taxon>
        <taxon>Pseudomonadota</taxon>
        <taxon>Gammaproteobacteria</taxon>
        <taxon>Pasteurellales</taxon>
        <taxon>Pasteurellaceae</taxon>
        <taxon>Actinobacillus</taxon>
    </lineage>
</organism>